<keyword id="KW-0175">Coiled coil</keyword>
<keyword id="KW-1185">Reference proteome</keyword>
<gene>
    <name type="ORF">F10E9.5</name>
</gene>
<accession>P34399</accession>
<name>YLU5_CAEEL</name>
<protein>
    <recommendedName>
        <fullName>Uncharacterized protein F10E9.5</fullName>
    </recommendedName>
</protein>
<feature type="chain" id="PRO_0000065289" description="Uncharacterized protein F10E9.5">
    <location>
        <begin position="1"/>
        <end position="199"/>
    </location>
</feature>
<feature type="region of interest" description="Disordered" evidence="2">
    <location>
        <begin position="98"/>
        <end position="127"/>
    </location>
</feature>
<feature type="coiled-coil region" evidence="1">
    <location>
        <begin position="72"/>
        <end position="116"/>
    </location>
</feature>
<feature type="compositionally biased region" description="Basic and acidic residues" evidence="2">
    <location>
        <begin position="98"/>
        <end position="117"/>
    </location>
</feature>
<dbReference type="EMBL" id="FO081105">
    <property type="protein sequence ID" value="CCD69139.1"/>
    <property type="molecule type" value="Genomic_DNA"/>
</dbReference>
<dbReference type="PIR" id="S44804">
    <property type="entry name" value="S44804"/>
</dbReference>
<dbReference type="RefSeq" id="NP_498824.3">
    <property type="nucleotide sequence ID" value="NM_066423.8"/>
</dbReference>
<dbReference type="SMR" id="P34399"/>
<dbReference type="BioGRID" id="49103">
    <property type="interactions" value="2"/>
</dbReference>
<dbReference type="FunCoup" id="P34399">
    <property type="interactions" value="2031"/>
</dbReference>
<dbReference type="STRING" id="6239.F10E9.5.1"/>
<dbReference type="PaxDb" id="6239-F10E9.5"/>
<dbReference type="PeptideAtlas" id="P34399"/>
<dbReference type="EnsemblMetazoa" id="F10E9.5.1">
    <property type="protein sequence ID" value="F10E9.5.1"/>
    <property type="gene ID" value="WBGene00017357"/>
</dbReference>
<dbReference type="GeneID" id="184305"/>
<dbReference type="KEGG" id="cel:CELE_F10E9.5"/>
<dbReference type="UCSC" id="F10E9.5">
    <property type="organism name" value="c. elegans"/>
</dbReference>
<dbReference type="AGR" id="WB:WBGene00017357"/>
<dbReference type="CTD" id="184305"/>
<dbReference type="WormBase" id="F10E9.5">
    <property type="protein sequence ID" value="CE41995"/>
    <property type="gene ID" value="WBGene00017357"/>
</dbReference>
<dbReference type="eggNOG" id="ENOG502S7KA">
    <property type="taxonomic scope" value="Eukaryota"/>
</dbReference>
<dbReference type="GeneTree" id="ENSGT00390000013608"/>
<dbReference type="HOGENOM" id="CLU_088344_0_0_1"/>
<dbReference type="InParanoid" id="P34399"/>
<dbReference type="OMA" id="FREFMAV"/>
<dbReference type="OrthoDB" id="5989213at2759"/>
<dbReference type="PhylomeDB" id="P34399"/>
<dbReference type="Reactome" id="R-CEL-191859">
    <property type="pathway name" value="snRNP Assembly"/>
</dbReference>
<dbReference type="PRO" id="PR:P34399"/>
<dbReference type="Proteomes" id="UP000001940">
    <property type="component" value="Chromosome III"/>
</dbReference>
<dbReference type="Bgee" id="WBGene00017357">
    <property type="expression patterns" value="Expressed in embryo and 3 other cell types or tissues"/>
</dbReference>
<dbReference type="GO" id="GO:0032797">
    <property type="term" value="C:SMN complex"/>
    <property type="evidence" value="ECO:0000318"/>
    <property type="project" value="GO_Central"/>
</dbReference>
<dbReference type="GO" id="GO:0000387">
    <property type="term" value="P:spliceosomal snRNP assembly"/>
    <property type="evidence" value="ECO:0000318"/>
    <property type="project" value="GO_Central"/>
</dbReference>
<dbReference type="InterPro" id="IPR034754">
    <property type="entry name" value="GEMIN8"/>
</dbReference>
<dbReference type="PANTHER" id="PTHR16238">
    <property type="entry name" value="GEM-ASSOCIATED PROTEIN 8"/>
    <property type="match status" value="1"/>
</dbReference>
<dbReference type="PANTHER" id="PTHR16238:SF7">
    <property type="entry name" value="GEM-ASSOCIATED PROTEIN 8"/>
    <property type="match status" value="1"/>
</dbReference>
<dbReference type="Pfam" id="PF15348">
    <property type="entry name" value="GEMIN8"/>
    <property type="match status" value="1"/>
</dbReference>
<reference key="1">
    <citation type="journal article" date="1994" name="Nature">
        <title>2.2 Mb of contiguous nucleotide sequence from chromosome III of C. elegans.</title>
        <authorList>
            <person name="Wilson R."/>
            <person name="Ainscough R."/>
            <person name="Anderson K."/>
            <person name="Baynes C."/>
            <person name="Berks M."/>
            <person name="Bonfield J."/>
            <person name="Burton J."/>
            <person name="Connell M."/>
            <person name="Copsey T."/>
            <person name="Cooper J."/>
            <person name="Coulson A."/>
            <person name="Craxton M."/>
            <person name="Dear S."/>
            <person name="Du Z."/>
            <person name="Durbin R."/>
            <person name="Favello A."/>
            <person name="Fraser A."/>
            <person name="Fulton L."/>
            <person name="Gardner A."/>
            <person name="Green P."/>
            <person name="Hawkins T."/>
            <person name="Hillier L."/>
            <person name="Jier M."/>
            <person name="Johnston L."/>
            <person name="Jones M."/>
            <person name="Kershaw J."/>
            <person name="Kirsten J."/>
            <person name="Laisster N."/>
            <person name="Latreille P."/>
            <person name="Lightning J."/>
            <person name="Lloyd C."/>
            <person name="Mortimore B."/>
            <person name="O'Callaghan M."/>
            <person name="Parsons J."/>
            <person name="Percy C."/>
            <person name="Rifken L."/>
            <person name="Roopra A."/>
            <person name="Saunders D."/>
            <person name="Shownkeen R."/>
            <person name="Sims M."/>
            <person name="Smaldon N."/>
            <person name="Smith A."/>
            <person name="Smith M."/>
            <person name="Sonnhammer E."/>
            <person name="Staden R."/>
            <person name="Sulston J."/>
            <person name="Thierry-Mieg J."/>
            <person name="Thomas K."/>
            <person name="Vaudin M."/>
            <person name="Vaughan K."/>
            <person name="Waterston R."/>
            <person name="Watson A."/>
            <person name="Weinstock L."/>
            <person name="Wilkinson-Sproat J."/>
            <person name="Wohldman P."/>
        </authorList>
    </citation>
    <scope>NUCLEOTIDE SEQUENCE [LARGE SCALE GENOMIC DNA]</scope>
    <source>
        <strain>Bristol N2</strain>
    </source>
</reference>
<reference key="2">
    <citation type="journal article" date="1998" name="Science">
        <title>Genome sequence of the nematode C. elegans: a platform for investigating biology.</title>
        <authorList>
            <consortium name="The C. elegans sequencing consortium"/>
        </authorList>
    </citation>
    <scope>NUCLEOTIDE SEQUENCE [LARGE SCALE GENOMIC DNA]</scope>
    <source>
        <strain>Bristol N2</strain>
    </source>
</reference>
<organism>
    <name type="scientific">Caenorhabditis elegans</name>
    <dbReference type="NCBI Taxonomy" id="6239"/>
    <lineage>
        <taxon>Eukaryota</taxon>
        <taxon>Metazoa</taxon>
        <taxon>Ecdysozoa</taxon>
        <taxon>Nematoda</taxon>
        <taxon>Chromadorea</taxon>
        <taxon>Rhabditida</taxon>
        <taxon>Rhabditina</taxon>
        <taxon>Rhabditomorpha</taxon>
        <taxon>Rhabditoidea</taxon>
        <taxon>Rhabditidae</taxon>
        <taxon>Peloderinae</taxon>
        <taxon>Caenorhabditis</taxon>
    </lineage>
</organism>
<evidence type="ECO:0000255" key="1"/>
<evidence type="ECO:0000256" key="2">
    <source>
        <dbReference type="SAM" id="MobiDB-lite"/>
    </source>
</evidence>
<sequence>MNNFLKHNDWARDPAFNHFWRHYDFSNQWIKQHTDASRQVQMQMVQRDNLSTEQCFSDSEEPEVIERLSRCEIYSEIENEESDIEEMSEEMKAFFAKTQEHRQKLKEQRAAEKRKEGQSSSKSQEEYVNVDKISIRGRIEQSTDHRNASAEFIAKREKAKKDYGESATKILAMESTLAMKFESEYSQNPQLWPNIPFRF</sequence>
<proteinExistence type="predicted"/>